<accession>Q84R49</accession>
<accession>A0A0N7KI04</accession>
<accession>Q0DNT2</accession>
<comment type="catalytic activity">
    <reaction>
        <text>Endohydrolysis of (1-&gt;4)-beta-D-glucosidic linkages in cellulose, lichenin and cereal beta-D-glucans.</text>
        <dbReference type="EC" id="3.2.1.4"/>
    </reaction>
</comment>
<comment type="subcellular location">
    <subcellularLocation>
        <location evidence="7">Membrane</location>
        <topology evidence="7">Single-pass type II membrane protein</topology>
    </subcellularLocation>
</comment>
<comment type="tissue specificity">
    <text evidence="6">Ubiquitous.</text>
</comment>
<comment type="similarity">
    <text evidence="4 7">Belongs to the glycosyl hydrolase 9 (cellulase E) family.</text>
</comment>
<evidence type="ECO:0000255" key="1"/>
<evidence type="ECO:0000255" key="2">
    <source>
        <dbReference type="PROSITE-ProRule" id="PRU10059"/>
    </source>
</evidence>
<evidence type="ECO:0000255" key="3">
    <source>
        <dbReference type="PROSITE-ProRule" id="PRU10060"/>
    </source>
</evidence>
<evidence type="ECO:0000255" key="4">
    <source>
        <dbReference type="PROSITE-ProRule" id="PRU10140"/>
    </source>
</evidence>
<evidence type="ECO:0000256" key="5">
    <source>
        <dbReference type="SAM" id="MobiDB-lite"/>
    </source>
</evidence>
<evidence type="ECO:0000269" key="6">
    <source>
    </source>
</evidence>
<evidence type="ECO:0000305" key="7"/>
<proteinExistence type="evidence at transcript level"/>
<feature type="chain" id="PRO_0000249287" description="Endoglucanase 10">
    <location>
        <begin position="1"/>
        <end position="620"/>
    </location>
</feature>
<feature type="transmembrane region" description="Helical; Signal-anchor for type II membrane protein" evidence="1">
    <location>
        <begin position="72"/>
        <end position="92"/>
    </location>
</feature>
<feature type="region of interest" description="Disordered" evidence="5">
    <location>
        <begin position="1"/>
        <end position="26"/>
    </location>
</feature>
<feature type="active site" description="Nucleophile" evidence="4">
    <location>
        <position position="165"/>
    </location>
</feature>
<feature type="active site" evidence="2">
    <location>
        <position position="513"/>
    </location>
</feature>
<feature type="active site" evidence="3">
    <location>
        <position position="561"/>
    </location>
</feature>
<feature type="active site" evidence="3">
    <location>
        <position position="570"/>
    </location>
</feature>
<feature type="glycosylation site" description="N-linked (GlcNAc...) asparagine" evidence="1">
    <location>
        <position position="216"/>
    </location>
</feature>
<feature type="glycosylation site" description="N-linked (GlcNAc...) asparagine" evidence="1">
    <location>
        <position position="314"/>
    </location>
</feature>
<feature type="glycosylation site" description="N-linked (GlcNAc...) asparagine" evidence="1">
    <location>
        <position position="323"/>
    </location>
</feature>
<feature type="glycosylation site" description="N-linked (GlcNAc...) asparagine" evidence="1">
    <location>
        <position position="344"/>
    </location>
</feature>
<feature type="glycosylation site" description="N-linked (GlcNAc...) asparagine" evidence="1">
    <location>
        <position position="408"/>
    </location>
</feature>
<feature type="glycosylation site" description="N-linked (GlcNAc...) asparagine" evidence="1">
    <location>
        <position position="425"/>
    </location>
</feature>
<feature type="glycosylation site" description="N-linked (GlcNAc...) asparagine" evidence="1">
    <location>
        <position position="567"/>
    </location>
</feature>
<gene>
    <name type="primary">GLU2</name>
    <name type="ordered locus">Os03g0736300</name>
    <name type="ordered locus">LOC_Os03g52630</name>
    <name type="ORF">OsJ_12485</name>
    <name type="ORF">OSJNBb0016H12.13</name>
</gene>
<organism>
    <name type="scientific">Oryza sativa subsp. japonica</name>
    <name type="common">Rice</name>
    <dbReference type="NCBI Taxonomy" id="39947"/>
    <lineage>
        <taxon>Eukaryota</taxon>
        <taxon>Viridiplantae</taxon>
        <taxon>Streptophyta</taxon>
        <taxon>Embryophyta</taxon>
        <taxon>Tracheophyta</taxon>
        <taxon>Spermatophyta</taxon>
        <taxon>Magnoliopsida</taxon>
        <taxon>Liliopsida</taxon>
        <taxon>Poales</taxon>
        <taxon>Poaceae</taxon>
        <taxon>BOP clade</taxon>
        <taxon>Oryzoideae</taxon>
        <taxon>Oryzeae</taxon>
        <taxon>Oryzinae</taxon>
        <taxon>Oryza</taxon>
        <taxon>Oryza sativa</taxon>
    </lineage>
</organism>
<keyword id="KW-0119">Carbohydrate metabolism</keyword>
<keyword id="KW-0961">Cell wall biogenesis/degradation</keyword>
<keyword id="KW-0136">Cellulose degradation</keyword>
<keyword id="KW-0325">Glycoprotein</keyword>
<keyword id="KW-0326">Glycosidase</keyword>
<keyword id="KW-0378">Hydrolase</keyword>
<keyword id="KW-0472">Membrane</keyword>
<keyword id="KW-0624">Polysaccharide degradation</keyword>
<keyword id="KW-1185">Reference proteome</keyword>
<keyword id="KW-0735">Signal-anchor</keyword>
<keyword id="KW-0812">Transmembrane</keyword>
<keyword id="KW-1133">Transmembrane helix</keyword>
<sequence length="620" mass="69067">MFGRDPWGGPLEISNADSATDDDRSRDLDRGALMRQLDETQQSWLLAGPGDQAGKKKKKYVDLGCMVLDRKIFMWTVGTILGVGLFIGFVMMIVKLVPHKRPPPPPPDQYTQALHKALMFFNAQRSGPLPKHNGVSWRGNSCMKDGLSDSTVRKSLVGGFYDAGDAIKFNYPMAWSMTMLSWSVIEYKAKYEAIGELDHVKELIKWGTDYLLKTFNSSADTIDRIVAQVGVGDTSKGGAQPNDHYCWMRPEDIDYPRPVTECHSCSDLASEMAAALAAASIVFKDSKTYSDKLVRGAKALYKFGRLQRGRYSPNGSDQAIFYNSTSYWDEFVWGGAWMYFATGNNTYLSVATAPGMAKHAGAYWLDSPNYGVFTWDDKLPGAQVLLSRLRLFLSPGYPYEEILRTFHNQTDNVMCSYLPMYNSFNFTKGGMIQLNHGRPQPLQYVVNAAFLASLYSDYLDAADTPGWYCGPTFYTTEVLRKFARSQLDYVLGKNPLKMSYVVGFGNKYPKRAHHRGASIPHNGVKYGCKGGFKWRETKKPNPNILIGALVAGPDRHDGFKDVRTNYNYTEPTLAANAGLVAALISLTNIHVKSGIDKNTIFSAVPPMFPTPPPPPSAWKP</sequence>
<dbReference type="EC" id="3.2.1.4"/>
<dbReference type="EMBL" id="AY387483">
    <property type="protein sequence ID" value="AAR07086.1"/>
    <property type="molecule type" value="Genomic_DNA"/>
</dbReference>
<dbReference type="EMBL" id="AC118133">
    <property type="protein sequence ID" value="AAP03405.1"/>
    <property type="molecule type" value="Genomic_DNA"/>
</dbReference>
<dbReference type="EMBL" id="DP000009">
    <property type="protein sequence ID" value="ABF98746.1"/>
    <property type="molecule type" value="Genomic_DNA"/>
</dbReference>
<dbReference type="EMBL" id="AP008209">
    <property type="protein sequence ID" value="BAF13106.1"/>
    <property type="molecule type" value="Genomic_DNA"/>
</dbReference>
<dbReference type="EMBL" id="AP014959">
    <property type="protein sequence ID" value="BAS86265.1"/>
    <property type="molecule type" value="Genomic_DNA"/>
</dbReference>
<dbReference type="EMBL" id="CM000140">
    <property type="protein sequence ID" value="EEE59884.1"/>
    <property type="molecule type" value="Genomic_DNA"/>
</dbReference>
<dbReference type="EMBL" id="AK070408">
    <property type="protein sequence ID" value="BAG91933.1"/>
    <property type="molecule type" value="mRNA"/>
</dbReference>
<dbReference type="RefSeq" id="XP_015630455.1">
    <property type="nucleotide sequence ID" value="XM_015774969.1"/>
</dbReference>
<dbReference type="SMR" id="Q84R49"/>
<dbReference type="FunCoup" id="Q84R49">
    <property type="interactions" value="564"/>
</dbReference>
<dbReference type="STRING" id="39947.Q84R49"/>
<dbReference type="CAZy" id="GH9">
    <property type="family name" value="Glycoside Hydrolase Family 9"/>
</dbReference>
<dbReference type="GlyCosmos" id="Q84R49">
    <property type="glycosylation" value="7 sites, No reported glycans"/>
</dbReference>
<dbReference type="PaxDb" id="39947-Q84R49"/>
<dbReference type="EnsemblPlants" id="Os03t0736300-01">
    <property type="protein sequence ID" value="Os03t0736300-01"/>
    <property type="gene ID" value="Os03g0736300"/>
</dbReference>
<dbReference type="Gramene" id="Os03t0736300-01">
    <property type="protein sequence ID" value="Os03t0736300-01"/>
    <property type="gene ID" value="Os03g0736300"/>
</dbReference>
<dbReference type="KEGG" id="dosa:Os03g0736300"/>
<dbReference type="eggNOG" id="ENOG502SJG7">
    <property type="taxonomic scope" value="Eukaryota"/>
</dbReference>
<dbReference type="HOGENOM" id="CLU_008926_1_3_1"/>
<dbReference type="InParanoid" id="Q84R49"/>
<dbReference type="OMA" id="FIMMIVK"/>
<dbReference type="OrthoDB" id="10257085at2759"/>
<dbReference type="Proteomes" id="UP000000763">
    <property type="component" value="Chromosome 3"/>
</dbReference>
<dbReference type="Proteomes" id="UP000007752">
    <property type="component" value="Chromosome 3"/>
</dbReference>
<dbReference type="Proteomes" id="UP000059680">
    <property type="component" value="Chromosome 3"/>
</dbReference>
<dbReference type="ExpressionAtlas" id="Q84R49">
    <property type="expression patterns" value="baseline and differential"/>
</dbReference>
<dbReference type="GO" id="GO:0016020">
    <property type="term" value="C:membrane"/>
    <property type="evidence" value="ECO:0007669"/>
    <property type="project" value="UniProtKB-SubCell"/>
</dbReference>
<dbReference type="GO" id="GO:0008810">
    <property type="term" value="F:cellulase activity"/>
    <property type="evidence" value="ECO:0007669"/>
    <property type="project" value="UniProtKB-EC"/>
</dbReference>
<dbReference type="GO" id="GO:0071555">
    <property type="term" value="P:cell wall organization"/>
    <property type="evidence" value="ECO:0007669"/>
    <property type="project" value="UniProtKB-KW"/>
</dbReference>
<dbReference type="GO" id="GO:0030245">
    <property type="term" value="P:cellulose catabolic process"/>
    <property type="evidence" value="ECO:0007669"/>
    <property type="project" value="UniProtKB-KW"/>
</dbReference>
<dbReference type="FunFam" id="1.50.10.10:FF:000020">
    <property type="entry name" value="Endoglucanase"/>
    <property type="match status" value="1"/>
</dbReference>
<dbReference type="Gene3D" id="1.50.10.10">
    <property type="match status" value="1"/>
</dbReference>
<dbReference type="InterPro" id="IPR008928">
    <property type="entry name" value="6-hairpin_glycosidase_sf"/>
</dbReference>
<dbReference type="InterPro" id="IPR012341">
    <property type="entry name" value="6hp_glycosidase-like_sf"/>
</dbReference>
<dbReference type="InterPro" id="IPR001701">
    <property type="entry name" value="Glyco_hydro_9"/>
</dbReference>
<dbReference type="InterPro" id="IPR033126">
    <property type="entry name" value="Glyco_hydro_9_Asp/Glu_AS"/>
</dbReference>
<dbReference type="InterPro" id="IPR018221">
    <property type="entry name" value="Glyco_hydro_9_His_AS"/>
</dbReference>
<dbReference type="PANTHER" id="PTHR22298">
    <property type="entry name" value="ENDO-1,4-BETA-GLUCANASE"/>
    <property type="match status" value="1"/>
</dbReference>
<dbReference type="Pfam" id="PF00759">
    <property type="entry name" value="Glyco_hydro_9"/>
    <property type="match status" value="1"/>
</dbReference>
<dbReference type="SUPFAM" id="SSF48208">
    <property type="entry name" value="Six-hairpin glycosidases"/>
    <property type="match status" value="1"/>
</dbReference>
<dbReference type="PROSITE" id="PS60032">
    <property type="entry name" value="GH9_1"/>
    <property type="match status" value="1"/>
</dbReference>
<dbReference type="PROSITE" id="PS00592">
    <property type="entry name" value="GH9_2"/>
    <property type="match status" value="1"/>
</dbReference>
<dbReference type="PROSITE" id="PS00698">
    <property type="entry name" value="GH9_3"/>
    <property type="match status" value="1"/>
</dbReference>
<protein>
    <recommendedName>
        <fullName>Endoglucanase 10</fullName>
        <ecNumber>3.2.1.4</ecNumber>
    </recommendedName>
    <alternativeName>
        <fullName>Endo-1,4-beta glucanase 10</fullName>
    </alternativeName>
    <alternativeName>
        <fullName>OsGLU2</fullName>
    </alternativeName>
</protein>
<name>GUN10_ORYSJ</name>
<reference key="1">
    <citation type="journal article" date="2003" name="Proc. Natl. Acad. Sci. U.S.A.">
        <title>A complex history of rearrangement in an orthologous region of the maize, sorghum, and rice genomes.</title>
        <authorList>
            <person name="Ilic K."/>
            <person name="SanMiguel P.J."/>
            <person name="Bennetzen J.L."/>
        </authorList>
    </citation>
    <scope>NUCLEOTIDE SEQUENCE [GENOMIC DNA]</scope>
</reference>
<reference key="2">
    <citation type="journal article" date="2005" name="Genome Res.">
        <title>Sequence, annotation, and analysis of synteny between rice chromosome 3 and diverged grass species.</title>
        <authorList>
            <consortium name="The rice chromosome 3 sequencing consortium"/>
            <person name="Buell C.R."/>
            <person name="Yuan Q."/>
            <person name="Ouyang S."/>
            <person name="Liu J."/>
            <person name="Zhu W."/>
            <person name="Wang A."/>
            <person name="Maiti R."/>
            <person name="Haas B."/>
            <person name="Wortman J."/>
            <person name="Pertea M."/>
            <person name="Jones K.M."/>
            <person name="Kim M."/>
            <person name="Overton L."/>
            <person name="Tsitrin T."/>
            <person name="Fadrosh D."/>
            <person name="Bera J."/>
            <person name="Weaver B."/>
            <person name="Jin S."/>
            <person name="Johri S."/>
            <person name="Reardon M."/>
            <person name="Webb K."/>
            <person name="Hill J."/>
            <person name="Moffat K."/>
            <person name="Tallon L."/>
            <person name="Van Aken S."/>
            <person name="Lewis M."/>
            <person name="Utterback T."/>
            <person name="Feldblyum T."/>
            <person name="Zismann V."/>
            <person name="Iobst S."/>
            <person name="Hsiao J."/>
            <person name="de Vazeille A.R."/>
            <person name="Salzberg S.L."/>
            <person name="White O."/>
            <person name="Fraser C.M."/>
            <person name="Yu Y."/>
            <person name="Kim H."/>
            <person name="Rambo T."/>
            <person name="Currie J."/>
            <person name="Collura K."/>
            <person name="Kernodle-Thompson S."/>
            <person name="Wei F."/>
            <person name="Kudrna K."/>
            <person name="Ammiraju J.S.S."/>
            <person name="Luo M."/>
            <person name="Goicoechea J.L."/>
            <person name="Wing R.A."/>
            <person name="Henry D."/>
            <person name="Oates R."/>
            <person name="Palmer M."/>
            <person name="Pries G."/>
            <person name="Saski C."/>
            <person name="Simmons J."/>
            <person name="Soderlund C."/>
            <person name="Nelson W."/>
            <person name="de la Bastide M."/>
            <person name="Spiegel L."/>
            <person name="Nascimento L."/>
            <person name="Huang E."/>
            <person name="Preston R."/>
            <person name="Zutavern T."/>
            <person name="Palmer L."/>
            <person name="O'Shaughnessy A."/>
            <person name="Dike S."/>
            <person name="McCombie W.R."/>
            <person name="Minx P."/>
            <person name="Cordum H."/>
            <person name="Wilson R."/>
            <person name="Jin W."/>
            <person name="Lee H.R."/>
            <person name="Jiang J."/>
            <person name="Jackson S."/>
        </authorList>
    </citation>
    <scope>NUCLEOTIDE SEQUENCE [LARGE SCALE GENOMIC DNA]</scope>
    <source>
        <strain>cv. Nipponbare</strain>
    </source>
</reference>
<reference key="3">
    <citation type="journal article" date="2005" name="Nature">
        <title>The map-based sequence of the rice genome.</title>
        <authorList>
            <consortium name="International rice genome sequencing project (IRGSP)"/>
        </authorList>
    </citation>
    <scope>NUCLEOTIDE SEQUENCE [LARGE SCALE GENOMIC DNA]</scope>
    <source>
        <strain>cv. Nipponbare</strain>
    </source>
</reference>
<reference key="4">
    <citation type="journal article" date="2008" name="Nucleic Acids Res.">
        <title>The rice annotation project database (RAP-DB): 2008 update.</title>
        <authorList>
            <consortium name="The rice annotation project (RAP)"/>
        </authorList>
    </citation>
    <scope>GENOME REANNOTATION</scope>
    <source>
        <strain>cv. Nipponbare</strain>
    </source>
</reference>
<reference key="5">
    <citation type="journal article" date="2013" name="Rice">
        <title>Improvement of the Oryza sativa Nipponbare reference genome using next generation sequence and optical map data.</title>
        <authorList>
            <person name="Kawahara Y."/>
            <person name="de la Bastide M."/>
            <person name="Hamilton J.P."/>
            <person name="Kanamori H."/>
            <person name="McCombie W.R."/>
            <person name="Ouyang S."/>
            <person name="Schwartz D.C."/>
            <person name="Tanaka T."/>
            <person name="Wu J."/>
            <person name="Zhou S."/>
            <person name="Childs K.L."/>
            <person name="Davidson R.M."/>
            <person name="Lin H."/>
            <person name="Quesada-Ocampo L."/>
            <person name="Vaillancourt B."/>
            <person name="Sakai H."/>
            <person name="Lee S.S."/>
            <person name="Kim J."/>
            <person name="Numa H."/>
            <person name="Itoh T."/>
            <person name="Buell C.R."/>
            <person name="Matsumoto T."/>
        </authorList>
    </citation>
    <scope>GENOME REANNOTATION</scope>
    <source>
        <strain>cv. Nipponbare</strain>
    </source>
</reference>
<reference key="6">
    <citation type="journal article" date="2005" name="PLoS Biol.">
        <title>The genomes of Oryza sativa: a history of duplications.</title>
        <authorList>
            <person name="Yu J."/>
            <person name="Wang J."/>
            <person name="Lin W."/>
            <person name="Li S."/>
            <person name="Li H."/>
            <person name="Zhou J."/>
            <person name="Ni P."/>
            <person name="Dong W."/>
            <person name="Hu S."/>
            <person name="Zeng C."/>
            <person name="Zhang J."/>
            <person name="Zhang Y."/>
            <person name="Li R."/>
            <person name="Xu Z."/>
            <person name="Li S."/>
            <person name="Li X."/>
            <person name="Zheng H."/>
            <person name="Cong L."/>
            <person name="Lin L."/>
            <person name="Yin J."/>
            <person name="Geng J."/>
            <person name="Li G."/>
            <person name="Shi J."/>
            <person name="Liu J."/>
            <person name="Lv H."/>
            <person name="Li J."/>
            <person name="Wang J."/>
            <person name="Deng Y."/>
            <person name="Ran L."/>
            <person name="Shi X."/>
            <person name="Wang X."/>
            <person name="Wu Q."/>
            <person name="Li C."/>
            <person name="Ren X."/>
            <person name="Wang J."/>
            <person name="Wang X."/>
            <person name="Li D."/>
            <person name="Liu D."/>
            <person name="Zhang X."/>
            <person name="Ji Z."/>
            <person name="Zhao W."/>
            <person name="Sun Y."/>
            <person name="Zhang Z."/>
            <person name="Bao J."/>
            <person name="Han Y."/>
            <person name="Dong L."/>
            <person name="Ji J."/>
            <person name="Chen P."/>
            <person name="Wu S."/>
            <person name="Liu J."/>
            <person name="Xiao Y."/>
            <person name="Bu D."/>
            <person name="Tan J."/>
            <person name="Yang L."/>
            <person name="Ye C."/>
            <person name="Zhang J."/>
            <person name="Xu J."/>
            <person name="Zhou Y."/>
            <person name="Yu Y."/>
            <person name="Zhang B."/>
            <person name="Zhuang S."/>
            <person name="Wei H."/>
            <person name="Liu B."/>
            <person name="Lei M."/>
            <person name="Yu H."/>
            <person name="Li Y."/>
            <person name="Xu H."/>
            <person name="Wei S."/>
            <person name="He X."/>
            <person name="Fang L."/>
            <person name="Zhang Z."/>
            <person name="Zhang Y."/>
            <person name="Huang X."/>
            <person name="Su Z."/>
            <person name="Tong W."/>
            <person name="Li J."/>
            <person name="Tong Z."/>
            <person name="Li S."/>
            <person name="Ye J."/>
            <person name="Wang L."/>
            <person name="Fang L."/>
            <person name="Lei T."/>
            <person name="Chen C.-S."/>
            <person name="Chen H.-C."/>
            <person name="Xu Z."/>
            <person name="Li H."/>
            <person name="Huang H."/>
            <person name="Zhang F."/>
            <person name="Xu H."/>
            <person name="Li N."/>
            <person name="Zhao C."/>
            <person name="Li S."/>
            <person name="Dong L."/>
            <person name="Huang Y."/>
            <person name="Li L."/>
            <person name="Xi Y."/>
            <person name="Qi Q."/>
            <person name="Li W."/>
            <person name="Zhang B."/>
            <person name="Hu W."/>
            <person name="Zhang Y."/>
            <person name="Tian X."/>
            <person name="Jiao Y."/>
            <person name="Liang X."/>
            <person name="Jin J."/>
            <person name="Gao L."/>
            <person name="Zheng W."/>
            <person name="Hao B."/>
            <person name="Liu S.-M."/>
            <person name="Wang W."/>
            <person name="Yuan L."/>
            <person name="Cao M."/>
            <person name="McDermott J."/>
            <person name="Samudrala R."/>
            <person name="Wang J."/>
            <person name="Wong G.K.-S."/>
            <person name="Yang H."/>
        </authorList>
    </citation>
    <scope>NUCLEOTIDE SEQUENCE [LARGE SCALE GENOMIC DNA]</scope>
    <source>
        <strain>cv. Nipponbare</strain>
    </source>
</reference>
<reference key="7">
    <citation type="journal article" date="2003" name="Science">
        <title>Collection, mapping, and annotation of over 28,000 cDNA clones from japonica rice.</title>
        <authorList>
            <consortium name="The rice full-length cDNA consortium"/>
        </authorList>
    </citation>
    <scope>NUCLEOTIDE SEQUENCE [LARGE SCALE MRNA]</scope>
    <source>
        <strain>cv. Nipponbare</strain>
    </source>
</reference>
<reference key="8">
    <citation type="journal article" date="2006" name="Plant Mol. Biol.">
        <title>OsGLU1, a putative membrane-bound endo-1,4-beta-D-glucanase from rice, affects plant internode elongation.</title>
        <authorList>
            <person name="Zhou H.-L."/>
            <person name="He S.-J."/>
            <person name="Cao Y.-R."/>
            <person name="Chen T."/>
            <person name="Du B.-X."/>
            <person name="Chu C.-C."/>
            <person name="Zhang J.-S."/>
            <person name="Chen S.-Y."/>
        </authorList>
    </citation>
    <scope>TISSUE SPECIFICITY</scope>
</reference>